<reference key="1">
    <citation type="journal article" date="2008" name="Environ. Microbiol.">
        <title>The genome of Erwinia tasmaniensis strain Et1/99, a non-pathogenic bacterium in the genus Erwinia.</title>
        <authorList>
            <person name="Kube M."/>
            <person name="Migdoll A.M."/>
            <person name="Mueller I."/>
            <person name="Kuhl H."/>
            <person name="Beck A."/>
            <person name="Reinhardt R."/>
            <person name="Geider K."/>
        </authorList>
    </citation>
    <scope>NUCLEOTIDE SEQUENCE [LARGE SCALE GENOMIC DNA]</scope>
    <source>
        <strain>DSM 17950 / CFBP 7177 / CIP 109463 / NCPPB 4357 / Et1/99</strain>
    </source>
</reference>
<proteinExistence type="inferred from homology"/>
<feature type="chain" id="PRO_1000188748" description="Xanthine-guanine phosphoribosyltransferase">
    <location>
        <begin position="1"/>
        <end position="152"/>
    </location>
</feature>
<feature type="binding site" evidence="1">
    <location>
        <begin position="37"/>
        <end position="38"/>
    </location>
    <ligand>
        <name>5-phospho-alpha-D-ribose 1-diphosphate</name>
        <dbReference type="ChEBI" id="CHEBI:58017"/>
    </ligand>
</feature>
<feature type="binding site" evidence="1">
    <location>
        <position position="69"/>
    </location>
    <ligand>
        <name>5-phospho-alpha-D-ribose 1-diphosphate</name>
        <dbReference type="ChEBI" id="CHEBI:58017"/>
    </ligand>
</feature>
<feature type="binding site" evidence="1">
    <location>
        <position position="69"/>
    </location>
    <ligand>
        <name>GMP</name>
        <dbReference type="ChEBI" id="CHEBI:58115"/>
    </ligand>
</feature>
<feature type="binding site" evidence="1">
    <location>
        <begin position="88"/>
        <end position="96"/>
    </location>
    <ligand>
        <name>5-phospho-alpha-D-ribose 1-diphosphate</name>
        <dbReference type="ChEBI" id="CHEBI:58017"/>
    </ligand>
</feature>
<feature type="binding site" evidence="1">
    <location>
        <position position="89"/>
    </location>
    <ligand>
        <name>Mg(2+)</name>
        <dbReference type="ChEBI" id="CHEBI:18420"/>
    </ligand>
</feature>
<feature type="binding site" evidence="1">
    <location>
        <begin position="92"/>
        <end position="96"/>
    </location>
    <ligand>
        <name>GMP</name>
        <dbReference type="ChEBI" id="CHEBI:58115"/>
    </ligand>
</feature>
<feature type="binding site" evidence="1">
    <location>
        <position position="92"/>
    </location>
    <ligand>
        <name>guanine</name>
        <dbReference type="ChEBI" id="CHEBI:16235"/>
    </ligand>
</feature>
<feature type="binding site" evidence="1">
    <location>
        <position position="92"/>
    </location>
    <ligand>
        <name>xanthine</name>
        <dbReference type="ChEBI" id="CHEBI:17712"/>
    </ligand>
</feature>
<feature type="binding site" evidence="1">
    <location>
        <begin position="134"/>
        <end position="135"/>
    </location>
    <ligand>
        <name>GMP</name>
        <dbReference type="ChEBI" id="CHEBI:58115"/>
    </ligand>
</feature>
<feature type="binding site" evidence="1">
    <location>
        <position position="135"/>
    </location>
    <ligand>
        <name>guanine</name>
        <dbReference type="ChEBI" id="CHEBI:16235"/>
    </ligand>
</feature>
<feature type="binding site" evidence="1">
    <location>
        <position position="135"/>
    </location>
    <ligand>
        <name>xanthine</name>
        <dbReference type="ChEBI" id="CHEBI:17712"/>
    </ligand>
</feature>
<dbReference type="EC" id="2.4.2.-" evidence="1"/>
<dbReference type="EC" id="2.4.2.22" evidence="1"/>
<dbReference type="EMBL" id="CU468135">
    <property type="protein sequence ID" value="CAO97644.1"/>
    <property type="molecule type" value="Genomic_DNA"/>
</dbReference>
<dbReference type="RefSeq" id="WP_012442309.1">
    <property type="nucleotide sequence ID" value="NC_010694.1"/>
</dbReference>
<dbReference type="SMR" id="B2VHN3"/>
<dbReference type="STRING" id="465817.ETA_25980"/>
<dbReference type="KEGG" id="eta:ETA_25980"/>
<dbReference type="eggNOG" id="COG2236">
    <property type="taxonomic scope" value="Bacteria"/>
</dbReference>
<dbReference type="HOGENOM" id="CLU_080904_3_0_6"/>
<dbReference type="OrthoDB" id="9789690at2"/>
<dbReference type="UniPathway" id="UPA00602">
    <property type="reaction ID" value="UER00658"/>
</dbReference>
<dbReference type="UniPathway" id="UPA00909">
    <property type="reaction ID" value="UER00887"/>
</dbReference>
<dbReference type="Proteomes" id="UP000001726">
    <property type="component" value="Chromosome"/>
</dbReference>
<dbReference type="GO" id="GO:0005829">
    <property type="term" value="C:cytosol"/>
    <property type="evidence" value="ECO:0007669"/>
    <property type="project" value="TreeGrafter"/>
</dbReference>
<dbReference type="GO" id="GO:0005886">
    <property type="term" value="C:plasma membrane"/>
    <property type="evidence" value="ECO:0007669"/>
    <property type="project" value="UniProtKB-SubCell"/>
</dbReference>
<dbReference type="GO" id="GO:0052657">
    <property type="term" value="F:guanine phosphoribosyltransferase activity"/>
    <property type="evidence" value="ECO:0007669"/>
    <property type="project" value="RHEA"/>
</dbReference>
<dbReference type="GO" id="GO:0004422">
    <property type="term" value="F:hypoxanthine phosphoribosyltransferase activity"/>
    <property type="evidence" value="ECO:0007669"/>
    <property type="project" value="TreeGrafter"/>
</dbReference>
<dbReference type="GO" id="GO:0000287">
    <property type="term" value="F:magnesium ion binding"/>
    <property type="evidence" value="ECO:0007669"/>
    <property type="project" value="UniProtKB-UniRule"/>
</dbReference>
<dbReference type="GO" id="GO:0000310">
    <property type="term" value="F:xanthine phosphoribosyltransferase activity"/>
    <property type="evidence" value="ECO:0007669"/>
    <property type="project" value="UniProtKB-UniRule"/>
</dbReference>
<dbReference type="GO" id="GO:0032263">
    <property type="term" value="P:GMP salvage"/>
    <property type="evidence" value="ECO:0007669"/>
    <property type="project" value="UniProtKB-UniRule"/>
</dbReference>
<dbReference type="GO" id="GO:0032264">
    <property type="term" value="P:IMP salvage"/>
    <property type="evidence" value="ECO:0007669"/>
    <property type="project" value="TreeGrafter"/>
</dbReference>
<dbReference type="GO" id="GO:0006166">
    <property type="term" value="P:purine ribonucleoside salvage"/>
    <property type="evidence" value="ECO:0007669"/>
    <property type="project" value="UniProtKB-KW"/>
</dbReference>
<dbReference type="GO" id="GO:0032265">
    <property type="term" value="P:XMP salvage"/>
    <property type="evidence" value="ECO:0007669"/>
    <property type="project" value="UniProtKB-UniRule"/>
</dbReference>
<dbReference type="CDD" id="cd06223">
    <property type="entry name" value="PRTases_typeI"/>
    <property type="match status" value="1"/>
</dbReference>
<dbReference type="FunFam" id="3.40.50.2020:FF:000009">
    <property type="entry name" value="Xanthine phosphoribosyltransferase"/>
    <property type="match status" value="1"/>
</dbReference>
<dbReference type="Gene3D" id="3.40.50.2020">
    <property type="match status" value="1"/>
</dbReference>
<dbReference type="HAMAP" id="MF_01903">
    <property type="entry name" value="XGPRT"/>
    <property type="match status" value="1"/>
</dbReference>
<dbReference type="InterPro" id="IPR000836">
    <property type="entry name" value="PRibTrfase_dom"/>
</dbReference>
<dbReference type="InterPro" id="IPR029057">
    <property type="entry name" value="PRTase-like"/>
</dbReference>
<dbReference type="InterPro" id="IPR023747">
    <property type="entry name" value="Xanthine_Guanine_PRibTrfase"/>
</dbReference>
<dbReference type="NCBIfam" id="NF006613">
    <property type="entry name" value="PRK09177.1"/>
    <property type="match status" value="1"/>
</dbReference>
<dbReference type="PANTHER" id="PTHR39563">
    <property type="entry name" value="XANTHINE PHOSPHORIBOSYLTRANSFERASE"/>
    <property type="match status" value="1"/>
</dbReference>
<dbReference type="PANTHER" id="PTHR39563:SF1">
    <property type="entry name" value="XANTHINE-GUANINE PHOSPHORIBOSYLTRANSFERASE"/>
    <property type="match status" value="1"/>
</dbReference>
<dbReference type="Pfam" id="PF00156">
    <property type="entry name" value="Pribosyltran"/>
    <property type="match status" value="1"/>
</dbReference>
<dbReference type="SUPFAM" id="SSF53271">
    <property type="entry name" value="PRTase-like"/>
    <property type="match status" value="1"/>
</dbReference>
<dbReference type="PROSITE" id="PS00103">
    <property type="entry name" value="PUR_PYR_PR_TRANSFER"/>
    <property type="match status" value="1"/>
</dbReference>
<accession>B2VHN3</accession>
<gene>
    <name evidence="1" type="primary">gpt</name>
    <name type="ordered locus">ETA_25980</name>
</gene>
<protein>
    <recommendedName>
        <fullName evidence="1">Xanthine-guanine phosphoribosyltransferase</fullName>
        <shortName evidence="1">XGPRT</shortName>
        <ecNumber evidence="1">2.4.2.-</ecNumber>
        <ecNumber evidence="1">2.4.2.22</ecNumber>
    </recommendedName>
    <alternativeName>
        <fullName evidence="1">Xanthine phosphoribosyltransferase</fullName>
    </alternativeName>
</protein>
<comment type="function">
    <text evidence="1">Purine salvage pathway enzyme that catalyzes the transfer of the ribosyl-5-phosphate group from 5-phospho-alpha-D-ribose 1-diphosphate (PRPP) to the N9 position of the 6-oxopurines guanine and xanthine to form the corresponding ribonucleotides GMP (guanosine 5'-monophosphate) and XMP (xanthosine 5'-monophosphate), with the release of PPi. To a lesser extent, also acts on hypoxanthine.</text>
</comment>
<comment type="catalytic activity">
    <reaction evidence="1">
        <text>GMP + diphosphate = guanine + 5-phospho-alpha-D-ribose 1-diphosphate</text>
        <dbReference type="Rhea" id="RHEA:25424"/>
        <dbReference type="ChEBI" id="CHEBI:16235"/>
        <dbReference type="ChEBI" id="CHEBI:33019"/>
        <dbReference type="ChEBI" id="CHEBI:58017"/>
        <dbReference type="ChEBI" id="CHEBI:58115"/>
    </reaction>
    <physiologicalReaction direction="right-to-left" evidence="1">
        <dbReference type="Rhea" id="RHEA:25426"/>
    </physiologicalReaction>
</comment>
<comment type="catalytic activity">
    <reaction evidence="1">
        <text>XMP + diphosphate = xanthine + 5-phospho-alpha-D-ribose 1-diphosphate</text>
        <dbReference type="Rhea" id="RHEA:10800"/>
        <dbReference type="ChEBI" id="CHEBI:17712"/>
        <dbReference type="ChEBI" id="CHEBI:33019"/>
        <dbReference type="ChEBI" id="CHEBI:57464"/>
        <dbReference type="ChEBI" id="CHEBI:58017"/>
        <dbReference type="EC" id="2.4.2.22"/>
    </reaction>
    <physiologicalReaction direction="right-to-left" evidence="1">
        <dbReference type="Rhea" id="RHEA:10802"/>
    </physiologicalReaction>
</comment>
<comment type="catalytic activity">
    <reaction evidence="1">
        <text>IMP + diphosphate = hypoxanthine + 5-phospho-alpha-D-ribose 1-diphosphate</text>
        <dbReference type="Rhea" id="RHEA:17973"/>
        <dbReference type="ChEBI" id="CHEBI:17368"/>
        <dbReference type="ChEBI" id="CHEBI:33019"/>
        <dbReference type="ChEBI" id="CHEBI:58017"/>
        <dbReference type="ChEBI" id="CHEBI:58053"/>
    </reaction>
    <physiologicalReaction direction="right-to-left" evidence="1">
        <dbReference type="Rhea" id="RHEA:17975"/>
    </physiologicalReaction>
</comment>
<comment type="cofactor">
    <cofactor evidence="1">
        <name>Mg(2+)</name>
        <dbReference type="ChEBI" id="CHEBI:18420"/>
    </cofactor>
</comment>
<comment type="pathway">
    <text evidence="1">Purine metabolism; GMP biosynthesis via salvage pathway; GMP from guanine: step 1/1.</text>
</comment>
<comment type="pathway">
    <text evidence="1">Purine metabolism; XMP biosynthesis via salvage pathway; XMP from xanthine: step 1/1.</text>
</comment>
<comment type="subunit">
    <text evidence="1">Homotetramer.</text>
</comment>
<comment type="subcellular location">
    <subcellularLocation>
        <location evidence="1">Cell inner membrane</location>
        <topology evidence="1">Peripheral membrane protein</topology>
    </subcellularLocation>
</comment>
<comment type="similarity">
    <text evidence="1">Belongs to the purine/pyrimidine phosphoribosyltransferase family. XGPT subfamily.</text>
</comment>
<sequence>MSEKYVVTWDMLQIHARKLAARLLPAEQWKGIIAVSRGGLVPAALLARELCIRHVDTVCISSYDHDNQREMSVLKRAEGDGEGFIVIDDLVDTGGTAQAIRDMYPKAHFVTIFAKPAGRPLVDDYIIDIPQNTWIEQPWDMGIAYIPPLVKS</sequence>
<name>XGPT_ERWT9</name>
<evidence type="ECO:0000255" key="1">
    <source>
        <dbReference type="HAMAP-Rule" id="MF_01903"/>
    </source>
</evidence>
<organism>
    <name type="scientific">Erwinia tasmaniensis (strain DSM 17950 / CFBP 7177 / CIP 109463 / NCPPB 4357 / Et1/99)</name>
    <dbReference type="NCBI Taxonomy" id="465817"/>
    <lineage>
        <taxon>Bacteria</taxon>
        <taxon>Pseudomonadati</taxon>
        <taxon>Pseudomonadota</taxon>
        <taxon>Gammaproteobacteria</taxon>
        <taxon>Enterobacterales</taxon>
        <taxon>Erwiniaceae</taxon>
        <taxon>Erwinia</taxon>
    </lineage>
</organism>
<keyword id="KW-0997">Cell inner membrane</keyword>
<keyword id="KW-1003">Cell membrane</keyword>
<keyword id="KW-0328">Glycosyltransferase</keyword>
<keyword id="KW-0460">Magnesium</keyword>
<keyword id="KW-0472">Membrane</keyword>
<keyword id="KW-0479">Metal-binding</keyword>
<keyword id="KW-0660">Purine salvage</keyword>
<keyword id="KW-1185">Reference proteome</keyword>
<keyword id="KW-0808">Transferase</keyword>